<proteinExistence type="evidence at protein level"/>
<protein>
    <recommendedName>
        <fullName evidence="5">UDP-N-acetylglucosamine 3-dehydrogenase</fullName>
        <ecNumber evidence="1">1.1.1.374</ecNumber>
    </recommendedName>
    <alternativeName>
        <fullName evidence="4">NAD(+)-dependent UDP-GlcNAc 3''-dehydrogenase</fullName>
    </alternativeName>
</protein>
<organism>
    <name type="scientific">Acidithiobacillus ferrooxidans (strain ATCC 23270 / DSM 14882 / CIP 104768 / NCIMB 8455)</name>
    <name type="common">Ferrobacillus ferrooxidans (strain ATCC 23270)</name>
    <dbReference type="NCBI Taxonomy" id="243159"/>
    <lineage>
        <taxon>Bacteria</taxon>
        <taxon>Pseudomonadati</taxon>
        <taxon>Pseudomonadota</taxon>
        <taxon>Acidithiobacillia</taxon>
        <taxon>Acidithiobacillales</taxon>
        <taxon>Acidithiobacillaceae</taxon>
        <taxon>Acidithiobacillus</taxon>
    </lineage>
</organism>
<gene>
    <name evidence="3" type="primary">gnnA</name>
    <name evidence="8" type="ordered locus">AFE_1457</name>
</gene>
<name>GNNA_ACIF2</name>
<feature type="chain" id="PRO_0000459718" description="UDP-N-acetylglucosamine 3-dehydrogenase">
    <location>
        <begin position="1"/>
        <end position="313"/>
    </location>
</feature>
<feature type="binding site" evidence="2 9">
    <location>
        <position position="13"/>
    </location>
    <ligand>
        <name>NAD(+)</name>
        <dbReference type="ChEBI" id="CHEBI:57540"/>
    </ligand>
</feature>
<feature type="binding site" evidence="2 9">
    <location>
        <position position="14"/>
    </location>
    <ligand>
        <name>NAD(+)</name>
        <dbReference type="ChEBI" id="CHEBI:57540"/>
    </ligand>
</feature>
<feature type="binding site" evidence="2 9 10">
    <location>
        <position position="38"/>
    </location>
    <ligand>
        <name>NAD(+)</name>
        <dbReference type="ChEBI" id="CHEBI:57540"/>
    </ligand>
</feature>
<feature type="mutagenesis site" description="Loss of activity." evidence="2">
    <original>K</original>
    <variation>A</variation>
    <location>
        <position position="91"/>
    </location>
</feature>
<feature type="mutagenesis site" description="Loss of activity." evidence="2">
    <original>H</original>
    <variation>N</variation>
    <location>
        <position position="164"/>
    </location>
</feature>
<feature type="strand" evidence="11">
    <location>
        <begin position="5"/>
        <end position="9"/>
    </location>
</feature>
<feature type="helix" evidence="11">
    <location>
        <begin position="13"/>
        <end position="25"/>
    </location>
</feature>
<feature type="strand" evidence="11">
    <location>
        <begin position="26"/>
        <end position="32"/>
    </location>
</feature>
<feature type="helix" evidence="11">
    <location>
        <begin position="36"/>
        <end position="46"/>
    </location>
</feature>
<feature type="helix" evidence="11">
    <location>
        <begin position="54"/>
        <end position="59"/>
    </location>
</feature>
<feature type="strand" evidence="11">
    <location>
        <begin position="62"/>
        <end position="66"/>
    </location>
</feature>
<feature type="helix" evidence="11">
    <location>
        <begin position="70"/>
        <end position="72"/>
    </location>
</feature>
<feature type="helix" evidence="11">
    <location>
        <begin position="73"/>
        <end position="82"/>
    </location>
</feature>
<feature type="strand" evidence="11">
    <location>
        <begin position="86"/>
        <end position="92"/>
    </location>
</feature>
<feature type="helix" evidence="11">
    <location>
        <begin position="97"/>
        <end position="110"/>
    </location>
</feature>
<feature type="strand" evidence="11">
    <location>
        <begin position="114"/>
        <end position="117"/>
    </location>
</feature>
<feature type="helix" evidence="11">
    <location>
        <begin position="119"/>
        <end position="122"/>
    </location>
</feature>
<feature type="helix" evidence="11">
    <location>
        <begin position="124"/>
        <end position="132"/>
    </location>
</feature>
<feature type="strand" evidence="11">
    <location>
        <begin position="138"/>
        <end position="147"/>
    </location>
</feature>
<feature type="helix" evidence="11">
    <location>
        <begin position="152"/>
        <end position="154"/>
    </location>
</feature>
<feature type="helix" evidence="11">
    <location>
        <begin position="157"/>
        <end position="161"/>
    </location>
</feature>
<feature type="helix" evidence="11">
    <location>
        <begin position="163"/>
        <end position="173"/>
    </location>
</feature>
<feature type="strand" evidence="11">
    <location>
        <begin position="177"/>
        <end position="185"/>
    </location>
</feature>
<feature type="strand" evidence="11">
    <location>
        <begin position="187"/>
        <end position="191"/>
    </location>
</feature>
<feature type="strand" evidence="11">
    <location>
        <begin position="193"/>
        <end position="201"/>
    </location>
</feature>
<feature type="strand" evidence="11">
    <location>
        <begin position="206"/>
        <end position="217"/>
    </location>
</feature>
<feature type="strand" evidence="11">
    <location>
        <begin position="219"/>
        <end position="225"/>
    </location>
</feature>
<feature type="strand" evidence="11">
    <location>
        <begin position="227"/>
        <end position="234"/>
    </location>
</feature>
<feature type="turn" evidence="11">
    <location>
        <begin position="235"/>
        <end position="238"/>
    </location>
</feature>
<feature type="strand" evidence="11">
    <location>
        <begin position="239"/>
        <end position="245"/>
    </location>
</feature>
<feature type="strand" evidence="11">
    <location>
        <begin position="255"/>
        <end position="261"/>
    </location>
</feature>
<feature type="helix" evidence="11">
    <location>
        <begin position="268"/>
        <end position="282"/>
    </location>
</feature>
<feature type="strand" evidence="11">
    <location>
        <begin position="287"/>
        <end position="289"/>
    </location>
</feature>
<feature type="helix" evidence="11">
    <location>
        <begin position="290"/>
        <end position="312"/>
    </location>
</feature>
<sequence>MIHMRTGVIGVGHLGRFHAQKYAAISQLAGVFDENAERAAEVAAELRCRAFPSVDALLAEVDAVSIVTPTSTHFAVAEVAMQAGVHCLIEKPFTLDTEEADALIGMAQERHLVLAIGHIKRVHPAIQYLRQAGFGAPRYLEAERLAPFKPRSLDIDVIMDLMIHDLDLTLLLTGAEPVDVRAVGVAAVTDKADMATAWMTLNNGTVANLAASRVVREPARRMRIFWQDRYASVDFLNNTLHIYHRGAGTVPGIPGVRDEAVDLAKRDALAAEIEDFLNAIAAHRPVFCDGVAGRRVLAAALQVRVAVEAFLQR</sequence>
<evidence type="ECO:0000269" key="1">
    <source>
    </source>
</evidence>
<evidence type="ECO:0000269" key="2">
    <source>
    </source>
</evidence>
<evidence type="ECO:0000303" key="3">
    <source>
    </source>
</evidence>
<evidence type="ECO:0000303" key="4">
    <source>
    </source>
</evidence>
<evidence type="ECO:0000305" key="5"/>
<evidence type="ECO:0000305" key="6">
    <source>
    </source>
</evidence>
<evidence type="ECO:0000305" key="7">
    <source>
    </source>
</evidence>
<evidence type="ECO:0000312" key="8">
    <source>
        <dbReference type="EMBL" id="ACK79142.1"/>
    </source>
</evidence>
<evidence type="ECO:0007744" key="9">
    <source>
        <dbReference type="PDB" id="7BVJ"/>
    </source>
</evidence>
<evidence type="ECO:0007744" key="10">
    <source>
        <dbReference type="PDB" id="7BVK"/>
    </source>
</evidence>
<evidence type="ECO:0007829" key="11">
    <source>
        <dbReference type="PDB" id="7BVJ"/>
    </source>
</evidence>
<accession>B7JA34</accession>
<reference key="1">
    <citation type="journal article" date="2004" name="J. Biol. Chem.">
        <title>Oxidation and transamination of the 3-position of UDP-N-acetylglucosamine by enzymes from Acidithiobacillus ferrooxidans. Role in the formation of lipid a molecules with four amide-linked acyl chains.</title>
        <authorList>
            <person name="Sweet C.R."/>
            <person name="Ribeiro A.A."/>
            <person name="Raetz C.R.H."/>
        </authorList>
    </citation>
    <scope>NUCLEOTIDE SEQUENCE [GENOMIC DNA]</scope>
    <scope>FUNCTION</scope>
    <scope>CATALYTIC ACTIVITY</scope>
    <source>
        <strain>ATCC 23270 / DSM 14882 / CIP 104768 / NCIMB 8455</strain>
    </source>
</reference>
<reference key="2">
    <citation type="journal article" date="2008" name="BMC Genomics">
        <title>Acidithiobacillus ferrooxidans metabolism: from genome sequence to industrial applications.</title>
        <authorList>
            <person name="Valdes J."/>
            <person name="Pedroso I."/>
            <person name="Quatrini R."/>
            <person name="Dodson R.J."/>
            <person name="Tettelin H."/>
            <person name="Blake R. II"/>
            <person name="Eisen J.A."/>
            <person name="Holmes D.S."/>
        </authorList>
    </citation>
    <scope>NUCLEOTIDE SEQUENCE [LARGE SCALE GENOMIC DNA]</scope>
    <source>
        <strain>ATCC 23270 / DSM 14882 / CIP 104768 / NCIMB 8455</strain>
    </source>
</reference>
<reference evidence="9 10" key="3">
    <citation type="journal article" date="2020" name="ACS Chem. Biol.">
        <title>Biochemical and structural investigation of GnnA in the lipopolysaccharide biosynthesis pathway of Acidithiobacillus ferrooxidans.</title>
        <authorList>
            <person name="Manissorn J."/>
            <person name="Sitthiyotha T."/>
            <person name="Montalban J.R.E."/>
            <person name="Chunsrivirot S."/>
            <person name="Thongnuek P."/>
            <person name="Wangkanont K."/>
        </authorList>
    </citation>
    <scope>X-RAY CRYSTALLOGRAPHY (2.15 ANGSTROMS) IN COMPLEX WITH NAD</scope>
    <scope>FUNCTION</scope>
    <scope>CATALYTIC ACTIVITY</scope>
    <scope>BIOPHYSICOCHEMICAL PROPERTIES</scope>
    <scope>SUBUNIT</scope>
    <scope>DOMAIN</scope>
    <scope>MUTAGENESIS OF LYS-91 AND HIS-164</scope>
</reference>
<dbReference type="EC" id="1.1.1.374" evidence="1"/>
<dbReference type="EMBL" id="AY541061">
    <property type="protein sequence ID" value="AAS48421.1"/>
    <property type="molecule type" value="Genomic_DNA"/>
</dbReference>
<dbReference type="EMBL" id="CP001219">
    <property type="protein sequence ID" value="ACK79142.1"/>
    <property type="molecule type" value="Genomic_DNA"/>
</dbReference>
<dbReference type="RefSeq" id="WP_012536533.1">
    <property type="nucleotide sequence ID" value="NC_011761.1"/>
</dbReference>
<dbReference type="PDB" id="7BVJ">
    <property type="method" value="X-ray"/>
    <property type="resolution" value="2.15 A"/>
    <property type="chains" value="A/B/C/D=1-313"/>
</dbReference>
<dbReference type="PDB" id="7BVK">
    <property type="method" value="X-ray"/>
    <property type="resolution" value="2.70 A"/>
    <property type="chains" value="A/B=1-313"/>
</dbReference>
<dbReference type="PDBsum" id="7BVJ"/>
<dbReference type="PDBsum" id="7BVK"/>
<dbReference type="SMR" id="B7JA34"/>
<dbReference type="STRING" id="243159.AFE_1457"/>
<dbReference type="PaxDb" id="243159-AFE_1457"/>
<dbReference type="GeneID" id="65280678"/>
<dbReference type="KEGG" id="afr:AFE_1457"/>
<dbReference type="eggNOG" id="COG0673">
    <property type="taxonomic scope" value="Bacteria"/>
</dbReference>
<dbReference type="HOGENOM" id="CLU_023194_10_0_6"/>
<dbReference type="UniPathway" id="UPA00973"/>
<dbReference type="Proteomes" id="UP000001362">
    <property type="component" value="Chromosome"/>
</dbReference>
<dbReference type="GO" id="GO:0016020">
    <property type="term" value="C:membrane"/>
    <property type="evidence" value="ECO:0007669"/>
    <property type="project" value="GOC"/>
</dbReference>
<dbReference type="GO" id="GO:0000166">
    <property type="term" value="F:nucleotide binding"/>
    <property type="evidence" value="ECO:0007669"/>
    <property type="project" value="InterPro"/>
</dbReference>
<dbReference type="GO" id="GO:0016491">
    <property type="term" value="F:oxidoreductase activity"/>
    <property type="evidence" value="ECO:0007669"/>
    <property type="project" value="UniProtKB-KW"/>
</dbReference>
<dbReference type="GO" id="GO:0009245">
    <property type="term" value="P:lipid A biosynthetic process"/>
    <property type="evidence" value="ECO:0007669"/>
    <property type="project" value="UniProtKB-UniPathway"/>
</dbReference>
<dbReference type="Gene3D" id="3.30.360.10">
    <property type="entry name" value="Dihydrodipicolinate Reductase, domain 2"/>
    <property type="match status" value="1"/>
</dbReference>
<dbReference type="Gene3D" id="3.40.50.720">
    <property type="entry name" value="NAD(P)-binding Rossmann-like Domain"/>
    <property type="match status" value="1"/>
</dbReference>
<dbReference type="InterPro" id="IPR000683">
    <property type="entry name" value="Gfo/Idh/MocA-like_OxRdtase_N"/>
</dbReference>
<dbReference type="InterPro" id="IPR051450">
    <property type="entry name" value="Gfo/Idh/MocA_Oxidoreductases"/>
</dbReference>
<dbReference type="InterPro" id="IPR055170">
    <property type="entry name" value="GFO_IDH_MocA-like_dom"/>
</dbReference>
<dbReference type="InterPro" id="IPR036291">
    <property type="entry name" value="NAD(P)-bd_dom_sf"/>
</dbReference>
<dbReference type="PANTHER" id="PTHR43377">
    <property type="entry name" value="BILIVERDIN REDUCTASE A"/>
    <property type="match status" value="1"/>
</dbReference>
<dbReference type="PANTHER" id="PTHR43377:SF1">
    <property type="entry name" value="BILIVERDIN REDUCTASE A"/>
    <property type="match status" value="1"/>
</dbReference>
<dbReference type="Pfam" id="PF01408">
    <property type="entry name" value="GFO_IDH_MocA"/>
    <property type="match status" value="1"/>
</dbReference>
<dbReference type="Pfam" id="PF22725">
    <property type="entry name" value="GFO_IDH_MocA_C3"/>
    <property type="match status" value="1"/>
</dbReference>
<dbReference type="SUPFAM" id="SSF55347">
    <property type="entry name" value="Glyceraldehyde-3-phosphate dehydrogenase-like, C-terminal domain"/>
    <property type="match status" value="1"/>
</dbReference>
<dbReference type="SUPFAM" id="SSF51735">
    <property type="entry name" value="NAD(P)-binding Rossmann-fold domains"/>
    <property type="match status" value="1"/>
</dbReference>
<comment type="function">
    <text evidence="1 2">Oxidoreductase involved in the synthesis of 2,3-diamino-2,3-dideoxy-D-glucopyranose (GlcN3N), which is a component of lipid A in some species (PubMed:15044494). Catalyzes the NAD(+)-dependent oxidation of the glucosamine 3-position of UDP-N-acetyl-glucosamine (UDP-GlcNAc) to a ketone moiety, forming UDP-2-acetamido-3-dehydro-2-deoxy-alpha-D-glucopyranose (UDP-3-oxo-GlcNAc) (PubMed:15044494, PubMed:33200610). Is specific for UDP-GlcNAc, no activity is observed with UDP-glucose (UDP-Glc), UDP-glucoronic acid (UDP-GlcA), UDP-galactose (UDP-Gal) and UDP-N-acetylgalactosamine (UDP-GalNAc) (PubMed:33200610). Cannot use FAD(+) and NADP(+) (PubMed:15044494, PubMed:33200610).</text>
</comment>
<comment type="catalytic activity">
    <reaction evidence="1 2">
        <text>UDP-N-acetyl-alpha-D-glucosamine + NAD(+) = UDP-2-acetamido-3-dehydro-2-deoxy-alpha-D-glucopyranose + NADH + H(+)</text>
        <dbReference type="Rhea" id="RHEA:42660"/>
        <dbReference type="ChEBI" id="CHEBI:15378"/>
        <dbReference type="ChEBI" id="CHEBI:57540"/>
        <dbReference type="ChEBI" id="CHEBI:57705"/>
        <dbReference type="ChEBI" id="CHEBI:57945"/>
        <dbReference type="ChEBI" id="CHEBI:78981"/>
        <dbReference type="EC" id="1.1.1.374"/>
    </reaction>
    <physiologicalReaction direction="left-to-right" evidence="1">
        <dbReference type="Rhea" id="RHEA:42661"/>
    </physiologicalReaction>
</comment>
<comment type="biophysicochemical properties">
    <kinetics>
        <KM evidence="2">0.8 mM for UDP-GlcNAc</KM>
        <KM evidence="2">0.25 mM for NAD(+)</KM>
    </kinetics>
</comment>
<comment type="pathway">
    <text evidence="6 7">Bacterial outer membrane biogenesis; LPS lipid A biosynthesis.</text>
</comment>
<comment type="subunit">
    <text evidence="2">Exists in multiple oligomeric states.</text>
</comment>
<comment type="domain">
    <text evidence="2">Structural data in combination with molecular dynamics simulation and mutational analysis suggest that Lys-91 or His-164 is likely the catalytic base that deprotonates the 3''-OH group for the oxidation reaction.</text>
</comment>
<comment type="similarity">
    <text evidence="5">Belongs to the Gfo/Idh/MocA family.</text>
</comment>
<keyword id="KW-0002">3D-structure</keyword>
<keyword id="KW-0441">Lipid A biosynthesis</keyword>
<keyword id="KW-0444">Lipid biosynthesis</keyword>
<keyword id="KW-0443">Lipid metabolism</keyword>
<keyword id="KW-0520">NAD</keyword>
<keyword id="KW-0560">Oxidoreductase</keyword>
<keyword id="KW-1185">Reference proteome</keyword>